<feature type="signal peptide" evidence="2">
    <location>
        <begin position="1"/>
        <end position="17"/>
    </location>
</feature>
<feature type="chain" id="PRO_0000007567" description="Fibulin-1">
    <location>
        <begin position="18"/>
        <end position="728"/>
    </location>
</feature>
<feature type="domain" description="Anaphylatoxin-like 1">
    <location>
        <begin position="23"/>
        <end position="64"/>
    </location>
</feature>
<feature type="domain" description="Anaphylatoxin-like 2">
    <location>
        <begin position="65"/>
        <end position="96"/>
    </location>
</feature>
<feature type="domain" description="Anaphylatoxin-like 3">
    <location>
        <begin position="97"/>
        <end position="129"/>
    </location>
</feature>
<feature type="domain" description="EGF-like 1" evidence="3">
    <location>
        <begin position="155"/>
        <end position="194"/>
    </location>
</feature>
<feature type="domain" description="EGF-like 2; calcium-binding" evidence="3">
    <location>
        <begin position="195"/>
        <end position="280"/>
    </location>
</feature>
<feature type="domain" description="EGF-like 3; calcium-binding" evidence="3">
    <location>
        <begin position="281"/>
        <end position="344"/>
    </location>
</feature>
<feature type="domain" description="EGF-like 4; calcium-binding" evidence="3">
    <location>
        <begin position="343"/>
        <end position="389"/>
    </location>
</feature>
<feature type="domain" description="EGF-like 5; calcium-binding" evidence="3">
    <location>
        <begin position="390"/>
        <end position="429"/>
    </location>
</feature>
<feature type="domain" description="EGF-like 6; calcium-binding" evidence="3">
    <location>
        <begin position="430"/>
        <end position="473"/>
    </location>
</feature>
<feature type="domain" description="EGF-like 7; calcium-binding" evidence="3">
    <location>
        <begin position="474"/>
        <end position="514"/>
    </location>
</feature>
<feature type="domain" description="EGF-like 8; calcium-binding" evidence="3">
    <location>
        <begin position="515"/>
        <end position="559"/>
    </location>
</feature>
<feature type="domain" description="EGF-like 9; calcium-binding" evidence="3">
    <location>
        <begin position="560"/>
        <end position="610"/>
    </location>
</feature>
<feature type="glycosylation site" description="N-linked (GlcNAc...) asparagine" evidence="8">
    <location>
        <position position="624"/>
    </location>
</feature>
<feature type="disulfide bond" evidence="3">
    <location>
        <begin position="23"/>
        <end position="49"/>
    </location>
</feature>
<feature type="disulfide bond" evidence="3">
    <location>
        <begin position="24"/>
        <end position="56"/>
    </location>
</feature>
<feature type="disulfide bond" evidence="3">
    <location>
        <begin position="37"/>
        <end position="57"/>
    </location>
</feature>
<feature type="disulfide bond" evidence="3">
    <location>
        <begin position="66"/>
        <end position="94"/>
    </location>
</feature>
<feature type="disulfide bond" evidence="3">
    <location>
        <begin position="79"/>
        <end position="95"/>
    </location>
</feature>
<feature type="disulfide bond" evidence="3">
    <location>
        <begin position="97"/>
        <end position="121"/>
    </location>
</feature>
<feature type="disulfide bond" evidence="3">
    <location>
        <begin position="98"/>
        <end position="128"/>
    </location>
</feature>
<feature type="disulfide bond" evidence="3">
    <location>
        <begin position="111"/>
        <end position="129"/>
    </location>
</feature>
<feature type="disulfide bond" evidence="3">
    <location>
        <begin position="159"/>
        <end position="168"/>
    </location>
</feature>
<feature type="disulfide bond" evidence="3">
    <location>
        <begin position="164"/>
        <end position="178"/>
    </location>
</feature>
<feature type="disulfide bond" evidence="3">
    <location>
        <begin position="180"/>
        <end position="279"/>
    </location>
</feature>
<feature type="disulfide bond" evidence="3">
    <location>
        <begin position="285"/>
        <end position="298"/>
    </location>
</feature>
<feature type="disulfide bond" evidence="3">
    <location>
        <begin position="292"/>
        <end position="307"/>
    </location>
</feature>
<feature type="disulfide bond" evidence="3">
    <location>
        <begin position="347"/>
        <end position="359"/>
    </location>
</feature>
<feature type="disulfide bond" evidence="3">
    <location>
        <begin position="353"/>
        <end position="368"/>
    </location>
</feature>
<feature type="disulfide bond" evidence="3">
    <location>
        <begin position="375"/>
        <end position="388"/>
    </location>
</feature>
<feature type="disulfide bond" evidence="3">
    <location>
        <begin position="394"/>
        <end position="404"/>
    </location>
</feature>
<feature type="disulfide bond" evidence="3">
    <location>
        <begin position="399"/>
        <end position="413"/>
    </location>
</feature>
<feature type="disulfide bond" evidence="3">
    <location>
        <begin position="415"/>
        <end position="428"/>
    </location>
</feature>
<feature type="disulfide bond" evidence="3">
    <location>
        <begin position="434"/>
        <end position="448"/>
    </location>
</feature>
<feature type="disulfide bond" evidence="3">
    <location>
        <begin position="442"/>
        <end position="457"/>
    </location>
</feature>
<feature type="disulfide bond" evidence="3">
    <location>
        <begin position="459"/>
        <end position="472"/>
    </location>
</feature>
<feature type="disulfide bond" evidence="3">
    <location>
        <begin position="478"/>
        <end position="489"/>
    </location>
</feature>
<feature type="disulfide bond" evidence="3">
    <location>
        <begin position="485"/>
        <end position="498"/>
    </location>
</feature>
<feature type="disulfide bond" evidence="3">
    <location>
        <begin position="500"/>
        <end position="513"/>
    </location>
</feature>
<feature type="disulfide bond" evidence="3">
    <location>
        <begin position="519"/>
        <end position="534"/>
    </location>
</feature>
<feature type="disulfide bond" evidence="3">
    <location>
        <begin position="530"/>
        <end position="543"/>
    </location>
</feature>
<feature type="disulfide bond" evidence="3">
    <location>
        <begin position="545"/>
        <end position="558"/>
    </location>
</feature>
<feature type="disulfide bond" evidence="3">
    <location>
        <begin position="564"/>
        <end position="576"/>
    </location>
</feature>
<feature type="disulfide bond" evidence="3">
    <location>
        <begin position="569"/>
        <end position="585"/>
    </location>
</feature>
<feature type="splice variant" id="VSP_001388" description="In isoform a and isoform b." evidence="11 12 13">
    <original>RNECLTRQSPCTQSEDCVNTIGGYICQRRISRLVPHRHRANRIGNAPRRMRDDPYSRAGEYREASQANTEFGCPMGWLFQHGHCV</original>
    <variation>IDECATLMDDCLESQRCLNTPGSFKCIRTLSCGTGYAMDSETERCR</variation>
    <location>
        <begin position="196"/>
        <end position="280"/>
    </location>
</feature>
<feature type="splice variant" id="VSP_001390" description="In isoform a." evidence="11 12 13">
    <original>QIADGYSCIKVCSTEDTECLGNHTREVLYQFRAVPSLKTIISPIEVSRIVTHMGVPFSVDYNLDYVGQRHFRIVQERNIGIVQLVKPISGPTVETIKVNIHTKSRTGVILAFNEAIIEISVSKYPF</original>
    <variation>RCNRQPSACGLPEECSKVPLFLTYQFISLARAVPISSHRPAITLFKVSAPNHADTEVNFELQLKTTIVGAPNVLPAIRANFLLQKGEKRNSAVVTLRDSLDGPQTVKLQLLLRMSKKGKNFNTYAANLIVDVAAHKRHNTVHPPLMKIR</variation>
    <location>
        <begin position="603"/>
        <end position="728"/>
    </location>
</feature>
<feature type="mutagenesis site" description="In k201/tk51; slight defect in posterior DTC migration. In a let-2 (k196) mutant background, partially prevents anterior DTC migration. Restores normal DTC migration and nid-1 basement membrane localization in a mig-17 (k174) mutant background but not in a mig-17 (k174) and nid-1 (cg119) mutant background. Restores nid-1 basement membrane localization in a mig-17 (k174) mutant background." evidence="5 9">
    <original>G</original>
    <variation>E</variation>
    <location>
        <position position="288"/>
    </location>
</feature>
<feature type="mutagenesis site" description="In k206; No defect in DTC migration. In a let-2 (k196) mutant background, partially prevents anterior DTC migration. Restores normal DTC migration and nid-1 basement membrane localization in a mig-17 (k174) mutant background but not in a mig-17 (k174) and nid-1 (cg119) mutant background." evidence="5 9">
    <original>H</original>
    <variation>Y</variation>
    <location>
        <position position="290"/>
    </location>
</feature>
<feature type="sequence conflict" description="In Ref. 1; AAC24035." evidence="14" ref="1">
    <original>D</original>
    <variation>DH</variation>
    <location>
        <position position="195"/>
    </location>
</feature>
<protein>
    <recommendedName>
        <fullName>Fibulin-1</fullName>
    </recommendedName>
</protein>
<comment type="function">
    <text evidence="4 5 6 7 9 10">Incorporated into fibronectin-containing matrix fibers. Plays a role in cell adhesion and migration along protein fibers within the extracellular matrix (ECM). Important for certain developmental processes and contributes to the supramolecular organization of ECM architecture, in particular to those of basement membranes.</text>
</comment>
<comment type="function">
    <molecule>Isoform a</molecule>
    <text evidence="4 5 6 7 9">Involved in regulating the shape and adhesion of cells in the developing pharynx, intestine, body-wall muscle and gonadal tissue (PubMed:16120639). During gonadogenesis, regulates the width of gonads and the migration of distal tip cells (DTC) (PubMed:15556862, PubMed:17043142, PubMed:22298704). Together with type IV collagen let-2 and downstream of metalloprotease mig-17, recruits nidogen nid-1 to the gonad basement membrane thereby inducing basement membrane remodeling required for the directional migration of DTCs (PubMed:15556863, PubMed:19104038). Acts antagonistically with metalloprotease gon-1 to maintain optimal levels of type IV collagen emb-9 in the gonad basement membrane during gonadogenesis (PubMed:15556862, PubMed:17043142, PubMed:22298704). Required for larval development (PubMed:17043142).</text>
</comment>
<comment type="function">
    <molecule>Isoform c</molecule>
    <text evidence="6">Involved in the assembly of the flexible hemicentin-containing tracks found joining the pharynx and body-wall-muscle basement membranes.</text>
</comment>
<comment type="subunit">
    <text evidence="1">Homomultimerizes and interacts with various extracellular matrix components.</text>
</comment>
<comment type="subcellular location">
    <molecule>Isoform a</molecule>
    <subcellularLocation>
        <location evidence="4 5 7">Secreted</location>
        <location evidence="4 5 7">Extracellular space</location>
        <location evidence="4 5 7">Extracellular matrix</location>
        <location evidence="4 5 7">Basement membrane</location>
    </subcellularLocation>
</comment>
<comment type="alternative products">
    <event type="alternative splicing"/>
    <isoform>
        <id>O77469-1</id>
        <name>c</name>
        <name>Fibulin-1D</name>
        <sequence type="displayed"/>
    </isoform>
    <isoform>
        <id>O77469-2</id>
        <name>a</name>
        <name>C</name>
        <name>Fibulin-1C</name>
        <sequence type="described" ref="VSP_001388 VSP_001390"/>
    </isoform>
    <isoform>
        <id>O77469-3</id>
        <name>b</name>
        <name>D</name>
        <sequence type="described" ref="VSP_001388"/>
    </isoform>
</comment>
<comment type="tissue specificity">
    <text evidence="4 5 6 7">Expressed in head muscle cells, anterior and posterior intestinal cells (PubMed:15556862). Isoform a: Expressed in male and hermaphrodite gonad, anterior and posterior intestine and pharyngeal basement membranes, body-wall muscle, GLR cells, uterine attachment and mechanosensory neurons (PubMed:15556863, PubMed:16120639, PubMed:17043142). Isoform c: Expressed on ALM/PLM mechanosensory neuron attachments, in flexible tracks connecting the pharyngeal, body-wall-muscle basement membranes and in uterine attachments (PubMed:16120639).</text>
</comment>
<comment type="developmental stage">
    <text evidence="6">Expressed from late embryonic stage onwards.</text>
</comment>
<comment type="disruption phenotype">
    <text evidence="6 7 10">Gonads have short and swollen arms. Pharyngeal defects. Movement is lethargic.</text>
</comment>
<comment type="miscellaneous">
    <text evidence="15">Although involved in the same pathway as gon-1 and mig-17, it is probably not cleaved by these metalloproteases.</text>
</comment>
<comment type="similarity">
    <text evidence="14">Belongs to the fibulin family.</text>
</comment>
<accession>O77469</accession>
<accession>O18026</accession>
<accession>O77474</accession>
<accession>Q20903</accession>
<accession>Q50JF9</accession>
<accession>Q5I5Q9</accession>
<accession>Q95NZ3</accession>
<accession>Q9TZS1</accession>
<sequence length="728" mass="79321">MRICFLLLAFLVAETFANELTRCCAGGTRHFKNSNTCSSIKSEGTSMTCQRAASICCLRSLLDNACDSGTDIAKEEESCPSNINILGGGLKKECCDCCLLAKDLLNRNEPCVAPVGFSAGCLRSFNKCCNGDIEITHASEIITGRPLNDPHVLHLGDRCASSHCEHLCHDRGGEKVECSCRSGFDLAPDGMACVDRNECLTRQSPCTQSEDCVNTIGGYICQRRISRLVPHRHRANRIGNAPRRMRDDPYSRAGEYREASQANTEFGCPMGWLFQHGHCVDVDECNLGSHDCGPLYQCRNTQGSYRCDAKKCGDGELQNPMTGECTSITCPNGYYPKNGMCNDIDECVTGHNCGAGEECVNTPGSFRCQQKGNLCAHGYEVNGATGFCEDVNECQQGVCGSMECINLPGTYKCKCGPGYEFNDAKKRCEDVDECIKFAGHVCDLSAECINTIGSFECKCKPGFQLASDGRRCEDVNECTTGIAACEQKCVNIPGSYQCICDRGFALGPDGTKCEDIDECSIWAGSGNDLCMGGCINTKGSYLCQCPPGYKIQPDGRTCVDVDECAMGECAGSDKVCVNTLGSFKCHSIDCPTNYIHDSLNKNQIADGYSCIKVCSTEDTECLGNHTREVLYQFRAVPSLKTIISPIEVSRIVTHMGVPFSVDYNLDYVGQRHFRIVQERNIGIVQLVKPISGPTVETIKVNIHTKSRTGVILAFNEAIIEISVSKYPF</sequence>
<organism>
    <name type="scientific">Caenorhabditis elegans</name>
    <dbReference type="NCBI Taxonomy" id="6239"/>
    <lineage>
        <taxon>Eukaryota</taxon>
        <taxon>Metazoa</taxon>
        <taxon>Ecdysozoa</taxon>
        <taxon>Nematoda</taxon>
        <taxon>Chromadorea</taxon>
        <taxon>Rhabditida</taxon>
        <taxon>Rhabditina</taxon>
        <taxon>Rhabditomorpha</taxon>
        <taxon>Rhabditoidea</taxon>
        <taxon>Rhabditidae</taxon>
        <taxon>Peloderinae</taxon>
        <taxon>Caenorhabditis</taxon>
    </lineage>
</organism>
<proteinExistence type="evidence at protein level"/>
<gene>
    <name type="primary">fbl-1</name>
    <name type="synonym">fbln1</name>
    <name type="ORF">F56H11.1</name>
</gene>
<evidence type="ECO:0000250" key="1"/>
<evidence type="ECO:0000255" key="2"/>
<evidence type="ECO:0000255" key="3">
    <source>
        <dbReference type="PROSITE-ProRule" id="PRU00076"/>
    </source>
</evidence>
<evidence type="ECO:0000269" key="4">
    <source>
    </source>
</evidence>
<evidence type="ECO:0000269" key="5">
    <source>
    </source>
</evidence>
<evidence type="ECO:0000269" key="6">
    <source>
    </source>
</evidence>
<evidence type="ECO:0000269" key="7">
    <source>
    </source>
</evidence>
<evidence type="ECO:0000269" key="8">
    <source>
    </source>
</evidence>
<evidence type="ECO:0000269" key="9">
    <source>
    </source>
</evidence>
<evidence type="ECO:0000269" key="10">
    <source>
    </source>
</evidence>
<evidence type="ECO:0000303" key="11">
    <source>
    </source>
</evidence>
<evidence type="ECO:0000303" key="12">
    <source>
    </source>
</evidence>
<evidence type="ECO:0000303" key="13">
    <source>
    </source>
</evidence>
<evidence type="ECO:0000305" key="14"/>
<evidence type="ECO:0000305" key="15">
    <source>
    </source>
</evidence>
<dbReference type="EMBL" id="AB212860">
    <property type="protein sequence ID" value="BAD98165.1"/>
    <property type="molecule type" value="mRNA"/>
</dbReference>
<dbReference type="EMBL" id="AY851363">
    <property type="protein sequence ID" value="AAW34127.1"/>
    <property type="molecule type" value="mRNA"/>
</dbReference>
<dbReference type="EMBL" id="AF051401">
    <property type="protein sequence ID" value="AAC28321.1"/>
    <property type="molecule type" value="mRNA"/>
</dbReference>
<dbReference type="EMBL" id="AF051402">
    <property type="protein sequence ID" value="AAC28322.1"/>
    <property type="molecule type" value="mRNA"/>
</dbReference>
<dbReference type="EMBL" id="AF051403">
    <property type="protein sequence ID" value="AAC28323.1"/>
    <property type="molecule type" value="Genomic_DNA"/>
</dbReference>
<dbReference type="EMBL" id="AF051403">
    <property type="protein sequence ID" value="AAC28324.1"/>
    <property type="molecule type" value="Genomic_DNA"/>
</dbReference>
<dbReference type="EMBL" id="AF070477">
    <property type="protein sequence ID" value="AAC24035.1"/>
    <property type="molecule type" value="Genomic_DNA"/>
</dbReference>
<dbReference type="EMBL" id="Z68749">
    <property type="protein sequence ID" value="CAA92962.2"/>
    <property type="molecule type" value="Genomic_DNA"/>
</dbReference>
<dbReference type="EMBL" id="Z68219">
    <property type="protein sequence ID" value="CAA92962.2"/>
    <property type="status" value="JOINED"/>
    <property type="molecule type" value="Genomic_DNA"/>
</dbReference>
<dbReference type="EMBL" id="Z68749">
    <property type="protein sequence ID" value="CAC35817.1"/>
    <property type="molecule type" value="Genomic_DNA"/>
</dbReference>
<dbReference type="EMBL" id="Z68219">
    <property type="protein sequence ID" value="CAC35817.1"/>
    <property type="status" value="JOINED"/>
    <property type="molecule type" value="Genomic_DNA"/>
</dbReference>
<dbReference type="EMBL" id="Z68749">
    <property type="protein sequence ID" value="CAC35818.1"/>
    <property type="molecule type" value="Genomic_DNA"/>
</dbReference>
<dbReference type="EMBL" id="Z68219">
    <property type="protein sequence ID" value="CAC35818.1"/>
    <property type="status" value="JOINED"/>
    <property type="molecule type" value="Genomic_DNA"/>
</dbReference>
<dbReference type="PIR" id="T22793">
    <property type="entry name" value="T22793"/>
</dbReference>
<dbReference type="PIR" id="T42760">
    <property type="entry name" value="T42760"/>
</dbReference>
<dbReference type="PIR" id="T42990">
    <property type="entry name" value="T42990"/>
</dbReference>
<dbReference type="PIR" id="T43210">
    <property type="entry name" value="T43210"/>
</dbReference>
<dbReference type="RefSeq" id="NP_001023236.1">
    <molecule id="O77469-2"/>
    <property type="nucleotide sequence ID" value="NM_001028065.4"/>
</dbReference>
<dbReference type="RefSeq" id="NP_001023237.1">
    <molecule id="O77469-3"/>
    <property type="nucleotide sequence ID" value="NM_001028066.6"/>
</dbReference>
<dbReference type="RefSeq" id="NP_501694.2">
    <molecule id="O77469-1"/>
    <property type="nucleotide sequence ID" value="NM_069293.4"/>
</dbReference>
<dbReference type="BioGRID" id="42893">
    <property type="interactions" value="8"/>
</dbReference>
<dbReference type="DIP" id="DIP-26629N"/>
<dbReference type="FunCoup" id="O77469">
    <property type="interactions" value="131"/>
</dbReference>
<dbReference type="IntAct" id="O77469">
    <property type="interactions" value="7"/>
</dbReference>
<dbReference type="MINT" id="O77469"/>
<dbReference type="STRING" id="6239.F56H11.1g.1"/>
<dbReference type="GlyCosmos" id="O77469">
    <property type="glycosylation" value="1 site, No reported glycans"/>
</dbReference>
<dbReference type="iPTMnet" id="O77469"/>
<dbReference type="PaxDb" id="6239-F56H11.1c"/>
<dbReference type="PeptideAtlas" id="O77469"/>
<dbReference type="EnsemblMetazoa" id="F56H11.1a.1">
    <molecule id="O77469-2"/>
    <property type="protein sequence ID" value="F56H11.1a.1"/>
    <property type="gene ID" value="WBGene00001403"/>
</dbReference>
<dbReference type="EnsemblMetazoa" id="F56H11.1b.1">
    <molecule id="O77469-3"/>
    <property type="protein sequence ID" value="F56H11.1b.1"/>
    <property type="gene ID" value="WBGene00001403"/>
</dbReference>
<dbReference type="EnsemblMetazoa" id="F56H11.1c.1">
    <molecule id="O77469-1"/>
    <property type="protein sequence ID" value="F56H11.1c.1"/>
    <property type="gene ID" value="WBGene00001403"/>
</dbReference>
<dbReference type="GeneID" id="177788"/>
<dbReference type="KEGG" id="cel:CELE_F56H11.1"/>
<dbReference type="UCSC" id="F56H11.1a.1">
    <molecule id="O77469-1"/>
    <property type="organism name" value="c. elegans"/>
</dbReference>
<dbReference type="AGR" id="WB:WBGene00001403"/>
<dbReference type="CTD" id="177788"/>
<dbReference type="WormBase" id="F56H11.1a">
    <molecule id="O77469-2"/>
    <property type="protein sequence ID" value="CE26701"/>
    <property type="gene ID" value="WBGene00001403"/>
    <property type="gene designation" value="fbl-1"/>
</dbReference>
<dbReference type="WormBase" id="F56H11.1b">
    <molecule id="O77469-3"/>
    <property type="protein sequence ID" value="CE26702"/>
    <property type="gene ID" value="WBGene00001403"/>
    <property type="gene designation" value="fbl-1"/>
</dbReference>
<dbReference type="WormBase" id="F56H11.1c">
    <molecule id="O77469-1"/>
    <property type="protein sequence ID" value="CE38374"/>
    <property type="gene ID" value="WBGene00001403"/>
    <property type="gene designation" value="fbl-1"/>
</dbReference>
<dbReference type="eggNOG" id="KOG1217">
    <property type="taxonomic scope" value="Eukaryota"/>
</dbReference>
<dbReference type="GeneTree" id="ENSGT00940000156642"/>
<dbReference type="InParanoid" id="O77469"/>
<dbReference type="OMA" id="RITSYHL"/>
<dbReference type="OrthoDB" id="10060424at2759"/>
<dbReference type="PhylomeDB" id="O77469"/>
<dbReference type="Reactome" id="R-CEL-2129379">
    <property type="pathway name" value="Molecules associated with elastic fibres"/>
</dbReference>
<dbReference type="PRO" id="PR:O77469"/>
<dbReference type="Proteomes" id="UP000001940">
    <property type="component" value="Chromosome IV"/>
</dbReference>
<dbReference type="Bgee" id="WBGene00001403">
    <property type="expression patterns" value="Expressed in larva and 3 other cell types or tissues"/>
</dbReference>
<dbReference type="ExpressionAtlas" id="O77469">
    <property type="expression patterns" value="baseline and differential"/>
</dbReference>
<dbReference type="GO" id="GO:0005604">
    <property type="term" value="C:basement membrane"/>
    <property type="evidence" value="ECO:0000314"/>
    <property type="project" value="WormBase"/>
</dbReference>
<dbReference type="GO" id="GO:0005576">
    <property type="term" value="C:extracellular region"/>
    <property type="evidence" value="ECO:0007669"/>
    <property type="project" value="UniProtKB-KW"/>
</dbReference>
<dbReference type="GO" id="GO:0005509">
    <property type="term" value="F:calcium ion binding"/>
    <property type="evidence" value="ECO:0007669"/>
    <property type="project" value="InterPro"/>
</dbReference>
<dbReference type="GO" id="GO:0005201">
    <property type="term" value="F:extracellular matrix structural constituent"/>
    <property type="evidence" value="ECO:0000315"/>
    <property type="project" value="WormBase"/>
</dbReference>
<dbReference type="GO" id="GO:0016504">
    <property type="term" value="F:peptidase activator activity"/>
    <property type="evidence" value="ECO:0007669"/>
    <property type="project" value="InterPro"/>
</dbReference>
<dbReference type="GO" id="GO:0030198">
    <property type="term" value="P:extracellular matrix organization"/>
    <property type="evidence" value="ECO:0000315"/>
    <property type="project" value="WormBase"/>
</dbReference>
<dbReference type="GO" id="GO:0040017">
    <property type="term" value="P:positive regulation of locomotion"/>
    <property type="evidence" value="ECO:0000315"/>
    <property type="project" value="WormBase"/>
</dbReference>
<dbReference type="GO" id="GO:0008104">
    <property type="term" value="P:protein localization"/>
    <property type="evidence" value="ECO:0000315"/>
    <property type="project" value="UniProtKB"/>
</dbReference>
<dbReference type="CDD" id="cd00054">
    <property type="entry name" value="EGF_CA"/>
    <property type="match status" value="2"/>
</dbReference>
<dbReference type="FunFam" id="2.10.25.10:FF:000038">
    <property type="entry name" value="Fibrillin 2"/>
    <property type="match status" value="1"/>
</dbReference>
<dbReference type="FunFam" id="2.10.25.10:FF:000078">
    <property type="entry name" value="Fibulin-1"/>
    <property type="match status" value="1"/>
</dbReference>
<dbReference type="FunFam" id="2.10.25.10:FF:000859">
    <property type="entry name" value="Fibulin-1"/>
    <property type="match status" value="2"/>
</dbReference>
<dbReference type="FunFam" id="2.10.25.10:FF:001118">
    <property type="entry name" value="Fibulin-1"/>
    <property type="match status" value="1"/>
</dbReference>
<dbReference type="Gene3D" id="2.10.25.10">
    <property type="entry name" value="Laminin"/>
    <property type="match status" value="9"/>
</dbReference>
<dbReference type="InterPro" id="IPR000020">
    <property type="entry name" value="Anaphylatoxin/fibulin"/>
</dbReference>
<dbReference type="InterPro" id="IPR026823">
    <property type="entry name" value="cEGF"/>
</dbReference>
<dbReference type="InterPro" id="IPR001881">
    <property type="entry name" value="EGF-like_Ca-bd_dom"/>
</dbReference>
<dbReference type="InterPro" id="IPR000742">
    <property type="entry name" value="EGF-like_dom"/>
</dbReference>
<dbReference type="InterPro" id="IPR000152">
    <property type="entry name" value="EGF-type_Asp/Asn_hydroxyl_site"/>
</dbReference>
<dbReference type="InterPro" id="IPR018097">
    <property type="entry name" value="EGF_Ca-bd_CS"/>
</dbReference>
<dbReference type="InterPro" id="IPR017048">
    <property type="entry name" value="Fibulin-1"/>
</dbReference>
<dbReference type="InterPro" id="IPR009030">
    <property type="entry name" value="Growth_fac_rcpt_cys_sf"/>
</dbReference>
<dbReference type="InterPro" id="IPR052235">
    <property type="entry name" value="Nephronectin_domain"/>
</dbReference>
<dbReference type="InterPro" id="IPR049883">
    <property type="entry name" value="NOTCH1_EGF-like"/>
</dbReference>
<dbReference type="PANTHER" id="PTHR24050:SF27">
    <property type="entry name" value="FIBRILLIN-1"/>
    <property type="match status" value="1"/>
</dbReference>
<dbReference type="PANTHER" id="PTHR24050">
    <property type="entry name" value="PA14 DOMAIN-CONTAINING PROTEIN"/>
    <property type="match status" value="1"/>
</dbReference>
<dbReference type="Pfam" id="PF12662">
    <property type="entry name" value="cEGF"/>
    <property type="match status" value="2"/>
</dbReference>
<dbReference type="Pfam" id="PF07645">
    <property type="entry name" value="EGF_CA"/>
    <property type="match status" value="5"/>
</dbReference>
<dbReference type="PIRSF" id="PIRSF036313">
    <property type="entry name" value="Fibulin-1"/>
    <property type="match status" value="1"/>
</dbReference>
<dbReference type="SMART" id="SM00181">
    <property type="entry name" value="EGF"/>
    <property type="match status" value="8"/>
</dbReference>
<dbReference type="SMART" id="SM00179">
    <property type="entry name" value="EGF_CA"/>
    <property type="match status" value="8"/>
</dbReference>
<dbReference type="SUPFAM" id="SSF57196">
    <property type="entry name" value="EGF/Laminin"/>
    <property type="match status" value="2"/>
</dbReference>
<dbReference type="SUPFAM" id="SSF57184">
    <property type="entry name" value="Growth factor receptor domain"/>
    <property type="match status" value="2"/>
</dbReference>
<dbReference type="PROSITE" id="PS01177">
    <property type="entry name" value="ANAPHYLATOXIN_1"/>
    <property type="match status" value="1"/>
</dbReference>
<dbReference type="PROSITE" id="PS00010">
    <property type="entry name" value="ASX_HYDROXYL"/>
    <property type="match status" value="4"/>
</dbReference>
<dbReference type="PROSITE" id="PS01186">
    <property type="entry name" value="EGF_2"/>
    <property type="match status" value="5"/>
</dbReference>
<dbReference type="PROSITE" id="PS50026">
    <property type="entry name" value="EGF_3"/>
    <property type="match status" value="5"/>
</dbReference>
<dbReference type="PROSITE" id="PS01187">
    <property type="entry name" value="EGF_CA"/>
    <property type="match status" value="8"/>
</dbReference>
<keyword id="KW-0025">Alternative splicing</keyword>
<keyword id="KW-0084">Basement membrane</keyword>
<keyword id="KW-0106">Calcium</keyword>
<keyword id="KW-0217">Developmental protein</keyword>
<keyword id="KW-1015">Disulfide bond</keyword>
<keyword id="KW-0245">EGF-like domain</keyword>
<keyword id="KW-0272">Extracellular matrix</keyword>
<keyword id="KW-0325">Glycoprotein</keyword>
<keyword id="KW-1185">Reference proteome</keyword>
<keyword id="KW-0677">Repeat</keyword>
<keyword id="KW-0964">Secreted</keyword>
<keyword id="KW-0732">Signal</keyword>
<reference key="1">
    <citation type="journal article" date="1998" name="Matrix Biol.">
        <title>Identification of chicken and C. elegans fibulin-1 homologs and characterization of the C. elegans fibulin-1 gene.</title>
        <authorList>
            <person name="Barth J.L."/>
            <person name="Argraves K.M."/>
            <person name="Roark E.F."/>
            <person name="Little C.D."/>
            <person name="Argraves W.S."/>
        </authorList>
    </citation>
    <scope>NUCLEOTIDE SEQUENCE [GENOMIC DNA / MRNA] (ISOFORMS A AND B)</scope>
    <source>
        <strain>CB1489</strain>
    </source>
</reference>
<reference key="2">
    <citation type="journal article" date="2004" name="Curr. Biol.">
        <title>A fibulin-1 homolog interacts with an ADAM protease that controls cell migration in C. elegans.</title>
        <authorList>
            <person name="Kubota Y."/>
            <person name="Kuroki R."/>
            <person name="Nishiwaki K."/>
        </authorList>
    </citation>
    <scope>NUCLEOTIDE SEQUENCE [MRNA] (ISOFORM A)</scope>
    <scope>FUNCTION</scope>
    <scope>SUBCELLULAR LOCATION</scope>
    <scope>TISSUE SPECIFICITY</scope>
    <scope>MUTAGENESIS OF GLY-288 AND HIS-290</scope>
</reference>
<reference key="3">
    <citation type="journal article" date="2005" name="Development">
        <title>Fibulin-1C and Fibulin-1D splice variants have distinct functions and assemble in a hemicentin-dependent manner.</title>
        <authorList>
            <person name="Muriel J.M."/>
            <person name="Dong C."/>
            <person name="Hutter H."/>
            <person name="Vogel B.E."/>
        </authorList>
    </citation>
    <scope>NUCLEOTIDE SEQUENCE [MRNA] (ISOFORM C)</scope>
    <scope>FUNCTION</scope>
    <scope>TISSUE SPECIFICITY</scope>
    <scope>DEVELOPMENTAL STAGE</scope>
    <scope>DISRUPTION PHENOTYPE</scope>
</reference>
<reference key="4">
    <citation type="journal article" date="1998" name="Science">
        <title>Genome sequence of the nematode C. elegans: a platform for investigating biology.</title>
        <authorList>
            <consortium name="The C. elegans sequencing consortium"/>
        </authorList>
    </citation>
    <scope>NUCLEOTIDE SEQUENCE [LARGE SCALE GENOMIC DNA]</scope>
    <scope>ALTERNATIVE SPLICING</scope>
    <source>
        <strain>Bristol N2</strain>
    </source>
</reference>
<reference key="5">
    <citation type="journal article" date="2004" name="Curr. Biol.">
        <title>GON-1 and fibulin have antagonistic roles in control of organ shape.</title>
        <authorList>
            <person name="Hesselson D."/>
            <person name="Newman C."/>
            <person name="Kim K.W."/>
            <person name="Kimble J."/>
        </authorList>
    </citation>
    <scope>FUNCTION</scope>
    <scope>SUBCELLULAR LOCATION</scope>
    <scope>TISSUE SPECIFICITY</scope>
</reference>
<reference key="6">
    <citation type="journal article" date="2006" name="J. Cell Biol.">
        <title>Growth control by EGF repeats of the C. elegans Fibulin-1C isoform.</title>
        <authorList>
            <person name="Hesselson D."/>
            <person name="Kimble J."/>
        </authorList>
    </citation>
    <scope>FUNCTION</scope>
    <scope>SUBCELLULAR LOCATION</scope>
    <scope>TISSUE SPECIFICITY</scope>
    <scope>DISRUPTION PHENOTYPE</scope>
</reference>
<reference key="7">
    <citation type="journal article" date="2008" name="Proc. Natl. Acad. Sci. U.S.A.">
        <title>MIG-17/ADAMTS controls cell migration by recruiting nidogen to the basement membrane in C. elegans.</title>
        <authorList>
            <person name="Kubota Y."/>
            <person name="Ohkura K."/>
            <person name="Tamai K.K."/>
            <person name="Nagata K."/>
            <person name="Nishiwaki K."/>
        </authorList>
    </citation>
    <scope>FUNCTION</scope>
    <scope>SUBCELLULAR LOCATION</scope>
    <scope>TISSUE SPECIFICITY</scope>
    <scope>MUTAGENESIS OF GLY-288 AND HIS-290</scope>
</reference>
<reference key="8">
    <citation type="journal article" date="2012" name="Genetics">
        <title>Tissue architecture in the Caenorhabditis elegans gonad depends on interactions among fibulin-1, type IV collagen and the ADAMTS extracellular protease.</title>
        <authorList>
            <person name="Kubota Y."/>
            <person name="Nagata K."/>
            <person name="Sugimoto A."/>
            <person name="Nishiwaki K."/>
        </authorList>
    </citation>
    <scope>FUNCTION</scope>
    <scope>DISRUPTION PHENOTYPE</scope>
</reference>
<reference key="9">
    <citation type="journal article" date="2007" name="Mol. Cell. Proteomics">
        <title>Proteomics reveals N-linked glycoprotein diversity in Caenorhabditis elegans and suggests an atypical translocation mechanism for integral membrane proteins.</title>
        <authorList>
            <person name="Kaji H."/>
            <person name="Kamiie J."/>
            <person name="Kawakami H."/>
            <person name="Kido K."/>
            <person name="Yamauchi Y."/>
            <person name="Shinkawa T."/>
            <person name="Taoka M."/>
            <person name="Takahashi N."/>
            <person name="Isobe T."/>
        </authorList>
    </citation>
    <scope>GLYCOSYLATION [LARGE SCALE ANALYSIS] AT ASN-624</scope>
    <scope>IDENTIFICATION BY MASS SPECTROMETRY</scope>
    <source>
        <strain>Bristol N2</strain>
    </source>
</reference>
<name>FBLN1_CAEEL</name>